<proteinExistence type="inferred from homology"/>
<comment type="catalytic activity">
    <reaction evidence="1">
        <text>(6S)-5,6,7,8-tetrahydrofolate + formate + ATP = (6R)-10-formyltetrahydrofolate + ADP + phosphate</text>
        <dbReference type="Rhea" id="RHEA:20221"/>
        <dbReference type="ChEBI" id="CHEBI:15740"/>
        <dbReference type="ChEBI" id="CHEBI:30616"/>
        <dbReference type="ChEBI" id="CHEBI:43474"/>
        <dbReference type="ChEBI" id="CHEBI:57453"/>
        <dbReference type="ChEBI" id="CHEBI:195366"/>
        <dbReference type="ChEBI" id="CHEBI:456216"/>
        <dbReference type="EC" id="6.3.4.3"/>
    </reaction>
</comment>
<comment type="pathway">
    <text evidence="1">One-carbon metabolism; tetrahydrofolate interconversion.</text>
</comment>
<comment type="similarity">
    <text evidence="1">Belongs to the formate--tetrahydrofolate ligase family.</text>
</comment>
<organism>
    <name type="scientific">Listeria monocytogenes serotype 4a (strain HCC23)</name>
    <dbReference type="NCBI Taxonomy" id="552536"/>
    <lineage>
        <taxon>Bacteria</taxon>
        <taxon>Bacillati</taxon>
        <taxon>Bacillota</taxon>
        <taxon>Bacilli</taxon>
        <taxon>Bacillales</taxon>
        <taxon>Listeriaceae</taxon>
        <taxon>Listeria</taxon>
    </lineage>
</organism>
<gene>
    <name evidence="1" type="primary">fhs</name>
    <name type="ordered locus">LMHCC_0680</name>
</gene>
<feature type="chain" id="PRO_1000185256" description="Formate--tetrahydrofolate ligase">
    <location>
        <begin position="1"/>
        <end position="560"/>
    </location>
</feature>
<feature type="binding site" evidence="1">
    <location>
        <begin position="69"/>
        <end position="76"/>
    </location>
    <ligand>
        <name>ATP</name>
        <dbReference type="ChEBI" id="CHEBI:30616"/>
    </ligand>
</feature>
<evidence type="ECO:0000255" key="1">
    <source>
        <dbReference type="HAMAP-Rule" id="MF_01543"/>
    </source>
</evidence>
<keyword id="KW-0067">ATP-binding</keyword>
<keyword id="KW-0436">Ligase</keyword>
<keyword id="KW-0547">Nucleotide-binding</keyword>
<keyword id="KW-0554">One-carbon metabolism</keyword>
<sequence length="560" mass="60130">MSNKVKSDIEIASKAEILPVTTIAEHLGLDADALELYGKYKAKLSYDTIHSLKDKETGKLVLVTAINPTPAGEGKSTVTVGLGDALSKKDKKTVIALREPSLGPTMGIKGGATGGGYAQVIPMEDINLHFTGDFHAITAANNALSAFIDNHMQQGNDLDIDGRRIVWKRVVDLNDRALRKVVVGLGGPIQGVPREDGFDITVASEIMAIICLASDLKDLKKRLSEIVIGYNYKKEPITVGEMGYEGALTLLLKDALKPNLVQTLEHTPAIVHGGPFANIAHGCNSVSATSTALRLGEYVVTEAGFGADLGAEKFLDIKVPALGKAPDCVVIVATIRALKMHGGALKTELSEENVDALAKGFTNLQKHTESIQTFGIPYVVAINKFITDSDAEVAKLEALCEEHGIPFSLTEVWEKGGDGGLELADKVIAAVESGEADYKRIYDDAWSIEEKLEAIVTKVYGGIGVELSSKAQKQIVEFKKYGWDRYPICMAKTQYSLSDDPTLLGRPTDFVIHIREFIPKLGAGFVVALTGDVMTMPGLPKKPAALNMDVDENGNAQGLF</sequence>
<accession>B8DDM6</accession>
<reference key="1">
    <citation type="journal article" date="2011" name="J. Bacteriol.">
        <title>Genome sequence of lineage III Listeria monocytogenes strain HCC23.</title>
        <authorList>
            <person name="Steele C.L."/>
            <person name="Donaldson J.R."/>
            <person name="Paul D."/>
            <person name="Banes M.M."/>
            <person name="Arick T."/>
            <person name="Bridges S.M."/>
            <person name="Lawrence M.L."/>
        </authorList>
    </citation>
    <scope>NUCLEOTIDE SEQUENCE [LARGE SCALE GENOMIC DNA]</scope>
    <source>
        <strain>HCC23</strain>
    </source>
</reference>
<dbReference type="EC" id="6.3.4.3" evidence="1"/>
<dbReference type="EMBL" id="CP001175">
    <property type="protein sequence ID" value="ACK39035.1"/>
    <property type="molecule type" value="Genomic_DNA"/>
</dbReference>
<dbReference type="RefSeq" id="WP_012581091.1">
    <property type="nucleotide sequence ID" value="NC_011660.1"/>
</dbReference>
<dbReference type="SMR" id="B8DDM6"/>
<dbReference type="KEGG" id="lmh:LMHCC_0680"/>
<dbReference type="HOGENOM" id="CLU_003601_3_3_9"/>
<dbReference type="UniPathway" id="UPA00193"/>
<dbReference type="GO" id="GO:0005524">
    <property type="term" value="F:ATP binding"/>
    <property type="evidence" value="ECO:0007669"/>
    <property type="project" value="UniProtKB-UniRule"/>
</dbReference>
<dbReference type="GO" id="GO:0004329">
    <property type="term" value="F:formate-tetrahydrofolate ligase activity"/>
    <property type="evidence" value="ECO:0007669"/>
    <property type="project" value="UniProtKB-UniRule"/>
</dbReference>
<dbReference type="GO" id="GO:0035999">
    <property type="term" value="P:tetrahydrofolate interconversion"/>
    <property type="evidence" value="ECO:0007669"/>
    <property type="project" value="UniProtKB-UniRule"/>
</dbReference>
<dbReference type="CDD" id="cd00477">
    <property type="entry name" value="FTHFS"/>
    <property type="match status" value="1"/>
</dbReference>
<dbReference type="FunFam" id="3.30.1510.10:FF:000001">
    <property type="entry name" value="Formate--tetrahydrofolate ligase"/>
    <property type="match status" value="1"/>
</dbReference>
<dbReference type="FunFam" id="3.10.410.10:FF:000001">
    <property type="entry name" value="Putative formate--tetrahydrofolate ligase"/>
    <property type="match status" value="1"/>
</dbReference>
<dbReference type="Gene3D" id="3.30.1510.10">
    <property type="entry name" value="Domain 2, N(10)-formyltetrahydrofolate synthetase"/>
    <property type="match status" value="1"/>
</dbReference>
<dbReference type="Gene3D" id="3.10.410.10">
    <property type="entry name" value="Formyltetrahydrofolate synthetase, domain 3"/>
    <property type="match status" value="1"/>
</dbReference>
<dbReference type="Gene3D" id="3.40.50.300">
    <property type="entry name" value="P-loop containing nucleotide triphosphate hydrolases"/>
    <property type="match status" value="1"/>
</dbReference>
<dbReference type="HAMAP" id="MF_01543">
    <property type="entry name" value="FTHFS"/>
    <property type="match status" value="1"/>
</dbReference>
<dbReference type="InterPro" id="IPR000559">
    <property type="entry name" value="Formate_THF_ligase"/>
</dbReference>
<dbReference type="InterPro" id="IPR020628">
    <property type="entry name" value="Formate_THF_ligase_CS"/>
</dbReference>
<dbReference type="InterPro" id="IPR027417">
    <property type="entry name" value="P-loop_NTPase"/>
</dbReference>
<dbReference type="NCBIfam" id="NF010030">
    <property type="entry name" value="PRK13505.1"/>
    <property type="match status" value="1"/>
</dbReference>
<dbReference type="Pfam" id="PF01268">
    <property type="entry name" value="FTHFS"/>
    <property type="match status" value="1"/>
</dbReference>
<dbReference type="SUPFAM" id="SSF52540">
    <property type="entry name" value="P-loop containing nucleoside triphosphate hydrolases"/>
    <property type="match status" value="1"/>
</dbReference>
<dbReference type="PROSITE" id="PS00721">
    <property type="entry name" value="FTHFS_1"/>
    <property type="match status" value="1"/>
</dbReference>
<dbReference type="PROSITE" id="PS00722">
    <property type="entry name" value="FTHFS_2"/>
    <property type="match status" value="1"/>
</dbReference>
<name>FTHS_LISMH</name>
<protein>
    <recommendedName>
        <fullName evidence="1">Formate--tetrahydrofolate ligase</fullName>
        <ecNumber evidence="1">6.3.4.3</ecNumber>
    </recommendedName>
    <alternativeName>
        <fullName evidence="1">Formyltetrahydrofolate synthetase</fullName>
        <shortName evidence="1">FHS</shortName>
        <shortName evidence="1">FTHFS</shortName>
    </alternativeName>
</protein>